<feature type="chain" id="PRO_0000432757" description="Cytosolic endo-beta-N-acetylglucosaminidase 2">
    <location>
        <begin position="1"/>
        <end position="701"/>
    </location>
</feature>
<name>ENAS2_ARATH</name>
<dbReference type="EC" id="3.2.1.96" evidence="1 2"/>
<dbReference type="EMBL" id="AC009991">
    <property type="protein sequence ID" value="AAF01517.1"/>
    <property type="molecule type" value="Genomic_DNA"/>
</dbReference>
<dbReference type="EMBL" id="CP002686">
    <property type="status" value="NOT_ANNOTATED_CDS"/>
    <property type="molecule type" value="Genomic_DNA"/>
</dbReference>
<dbReference type="SMR" id="Q9SRL4"/>
<dbReference type="FunCoup" id="Q9SRL4">
    <property type="interactions" value="1161"/>
</dbReference>
<dbReference type="STRING" id="3702.Q9SRL4"/>
<dbReference type="CAZy" id="GH85">
    <property type="family name" value="Glycoside Hydrolase Family 85"/>
</dbReference>
<dbReference type="PaxDb" id="3702-AT3G11040.1"/>
<dbReference type="Araport" id="AT3G11040"/>
<dbReference type="TAIR" id="AT3G11040">
    <property type="gene designation" value="ENGASE85B"/>
</dbReference>
<dbReference type="eggNOG" id="KOG2331">
    <property type="taxonomic scope" value="Eukaryota"/>
</dbReference>
<dbReference type="HOGENOM" id="CLU_015297_1_0_1"/>
<dbReference type="InParanoid" id="Q9SRL4"/>
<dbReference type="PhylomeDB" id="Q9SRL4"/>
<dbReference type="PRO" id="PR:Q9SRL4"/>
<dbReference type="Proteomes" id="UP000006548">
    <property type="component" value="Chromosome 3"/>
</dbReference>
<dbReference type="ExpressionAtlas" id="Q9SRL4">
    <property type="expression patterns" value="baseline and differential"/>
</dbReference>
<dbReference type="GO" id="GO:0005737">
    <property type="term" value="C:cytoplasm"/>
    <property type="evidence" value="ECO:0000314"/>
    <property type="project" value="TAIR"/>
</dbReference>
<dbReference type="GO" id="GO:0005829">
    <property type="term" value="C:cytosol"/>
    <property type="evidence" value="ECO:0007669"/>
    <property type="project" value="UniProtKB-SubCell"/>
</dbReference>
<dbReference type="GO" id="GO:0033925">
    <property type="term" value="F:mannosyl-glycoprotein endo-beta-N-acetylglucosaminidase activity"/>
    <property type="evidence" value="ECO:0000314"/>
    <property type="project" value="TAIR"/>
</dbReference>
<dbReference type="GO" id="GO:0006491">
    <property type="term" value="P:N-glycan processing"/>
    <property type="evidence" value="ECO:0000314"/>
    <property type="project" value="TAIR"/>
</dbReference>
<dbReference type="GO" id="GO:0006517">
    <property type="term" value="P:protein deglycosylation"/>
    <property type="evidence" value="ECO:0000316"/>
    <property type="project" value="TAIR"/>
</dbReference>
<dbReference type="CDD" id="cd06547">
    <property type="entry name" value="GH85_ENGase"/>
    <property type="match status" value="1"/>
</dbReference>
<dbReference type="FunFam" id="3.20.20.80:FF:000043">
    <property type="entry name" value="cytosolic endo-beta-N-acetylglucosaminidase"/>
    <property type="match status" value="1"/>
</dbReference>
<dbReference type="FunFam" id="2.60.120.260:FF:000278">
    <property type="entry name" value="Glycosyl hydrolase family 85"/>
    <property type="match status" value="1"/>
</dbReference>
<dbReference type="Gene3D" id="2.60.120.260">
    <property type="entry name" value="Galactose-binding domain-like"/>
    <property type="match status" value="1"/>
</dbReference>
<dbReference type="Gene3D" id="3.20.20.80">
    <property type="entry name" value="Glycosidases"/>
    <property type="match status" value="1"/>
</dbReference>
<dbReference type="InterPro" id="IPR032979">
    <property type="entry name" value="ENGase"/>
</dbReference>
<dbReference type="InterPro" id="IPR005201">
    <property type="entry name" value="Glyco_hydro_85"/>
</dbReference>
<dbReference type="InterPro" id="IPR017853">
    <property type="entry name" value="Glycoside_hydrolase_SF"/>
</dbReference>
<dbReference type="PANTHER" id="PTHR13246:SF6">
    <property type="entry name" value="CYTOSOLIC ENDO-BETA-N-ACETYLGLUCOSAMINIDASE 2"/>
    <property type="match status" value="1"/>
</dbReference>
<dbReference type="PANTHER" id="PTHR13246">
    <property type="entry name" value="ENDO BETA N-ACETYLGLUCOSAMINIDASE"/>
    <property type="match status" value="1"/>
</dbReference>
<dbReference type="Pfam" id="PF03644">
    <property type="entry name" value="Glyco_hydro_85"/>
    <property type="match status" value="1"/>
</dbReference>
<dbReference type="SUPFAM" id="SSF51445">
    <property type="entry name" value="(Trans)glycosidases"/>
    <property type="match status" value="1"/>
</dbReference>
<keyword id="KW-0963">Cytoplasm</keyword>
<keyword id="KW-0326">Glycosidase</keyword>
<keyword id="KW-0378">Hydrolase</keyword>
<keyword id="KW-1185">Reference proteome</keyword>
<sequence>MPKSNDDDVAQSEAVPLLDLVKPSLPISFPIKALQDLKSRSYFDSFHFQFNRSTVPFRRNSDCLPNRPRVLVCHDMKGGYVDDKWVQGCENEAGFAIWHWYLMDIFVYFSHSLVTIPPPCWTNTAHRHGVKVLGTFITEWDEGKATCKEMLATKESAQMYAERLAELATALGFDGWLINIENDIDEEQIPNMKEFVSHLKKVLHLSTPGALVIWYDSVTVRGNLQWQDQLTELNKPFFDLCDGIFMNYTWKESYPNLSAEVAGDRKFDVYMGIDVFGRGSFGGGQWTVNAALDLLKRNNVSAAIFAPGWVYETAQPPNFHTAQNKWWSLVEKSWGIVQTYPQVLPFYSDFNQGFGYHVSLEGRQLSDSPWYNISCQSLQPLLEFNEDNKDIIQVTVDQEGKNVFDFSEQHLNNYYEYDSAREASFNGGGNIVFRGKLKGDAYFTTRLFKPHLQLSSSPITISYSVKSDETSNLGILLSFSSPSLETKSILVAPEDPIRRFDDMSLQCLTTSVQTVSEWTVHEASLVMDGHTLTEISAFCYRPENSTKSAEFVALLGHISVKDHVQNQQNPEILLPASSWVIEAHNVELVPGNSSSKILRVKLEWRQKDLEDSAFTRYNVYAENVKSTDLRPRKVLEKPKSETVLLGIAHVPAYYVAELVVESDVKAVRFMVQACGEDASLGKLDEALNLLVDLEGLSVNHD</sequence>
<comment type="function">
    <text evidence="1 2">Endoglycosidase that releases N-glycans from glycoproteins by cleaving the beta-1,4-glycosidic bond in the N,N'-diacetylchitobiose core. Involved in the production of high-mannose type N-glycans during plant development and fruit maturation.</text>
</comment>
<comment type="catalytic activity">
    <reaction evidence="1 2">
        <text>an N(4)-(oligosaccharide-(1-&gt;3)-[oligosaccharide-(1-&gt;6)]-beta-D-Man-(1-&gt;4)-beta-D-GlcNAc-(1-&gt;4)-alpha-D-GlcNAc)-L-asparaginyl-[protein] + H2O = an oligosaccharide-(1-&gt;3)-[oligosaccharide-(1-&gt;6)]-beta-D-Man-(1-&gt;4)-D-GlcNAc + N(4)-(N-acetyl-beta-D-glucosaminyl)-L-asparaginyl-[protein]</text>
        <dbReference type="Rhea" id="RHEA:73067"/>
        <dbReference type="Rhea" id="RHEA-COMP:12603"/>
        <dbReference type="Rhea" id="RHEA-COMP:18176"/>
        <dbReference type="ChEBI" id="CHEBI:15377"/>
        <dbReference type="ChEBI" id="CHEBI:132248"/>
        <dbReference type="ChEBI" id="CHEBI:192714"/>
        <dbReference type="ChEBI" id="CHEBI:192715"/>
        <dbReference type="EC" id="3.2.1.96"/>
    </reaction>
</comment>
<comment type="biophysicochemical properties">
    <kinetics>
        <KM evidence="2">0.1 mM for dabsyl-Asn-Man5</KM>
    </kinetics>
    <phDependence>
        <text evidence="2">Optimum pH is 6.0-7.0.</text>
    </phDependence>
</comment>
<comment type="subcellular location">
    <subcellularLocation>
        <location evidence="2">Cytoplasm</location>
        <location evidence="2">Cytosol</location>
    </subcellularLocation>
</comment>
<comment type="disruption phenotype">
    <text evidence="1 2">No visible phenotype under normal growth conditions, but the double mutants engase85A and engase85B accumulate very high level of free N-glycans carrying two GlcNAc at the reducing end, but their counterparts with a single GlcNAc are completely absent.</text>
</comment>
<comment type="similarity">
    <text evidence="4">Belongs to the glycosyl hydrolase 85 family.</text>
</comment>
<proteinExistence type="evidence at protein level"/>
<accession>Q9SRL4</accession>
<reference key="1">
    <citation type="journal article" date="2000" name="Nature">
        <title>Sequence and analysis of chromosome 3 of the plant Arabidopsis thaliana.</title>
        <authorList>
            <person name="Salanoubat M."/>
            <person name="Lemcke K."/>
            <person name="Rieger M."/>
            <person name="Ansorge W."/>
            <person name="Unseld M."/>
            <person name="Fartmann B."/>
            <person name="Valle G."/>
            <person name="Bloecker H."/>
            <person name="Perez-Alonso M."/>
            <person name="Obermaier B."/>
            <person name="Delseny M."/>
            <person name="Boutry M."/>
            <person name="Grivell L.A."/>
            <person name="Mache R."/>
            <person name="Puigdomenech P."/>
            <person name="De Simone V."/>
            <person name="Choisne N."/>
            <person name="Artiguenave F."/>
            <person name="Robert C."/>
            <person name="Brottier P."/>
            <person name="Wincker P."/>
            <person name="Cattolico L."/>
            <person name="Weissenbach J."/>
            <person name="Saurin W."/>
            <person name="Quetier F."/>
            <person name="Schaefer M."/>
            <person name="Mueller-Auer S."/>
            <person name="Gabel C."/>
            <person name="Fuchs M."/>
            <person name="Benes V."/>
            <person name="Wurmbach E."/>
            <person name="Drzonek H."/>
            <person name="Erfle H."/>
            <person name="Jordan N."/>
            <person name="Bangert S."/>
            <person name="Wiedelmann R."/>
            <person name="Kranz H."/>
            <person name="Voss H."/>
            <person name="Holland R."/>
            <person name="Brandt P."/>
            <person name="Nyakatura G."/>
            <person name="Vezzi A."/>
            <person name="D'Angelo M."/>
            <person name="Pallavicini A."/>
            <person name="Toppo S."/>
            <person name="Simionati B."/>
            <person name="Conrad A."/>
            <person name="Hornischer K."/>
            <person name="Kauer G."/>
            <person name="Loehnert T.-H."/>
            <person name="Nordsiek G."/>
            <person name="Reichelt J."/>
            <person name="Scharfe M."/>
            <person name="Schoen O."/>
            <person name="Bargues M."/>
            <person name="Terol J."/>
            <person name="Climent J."/>
            <person name="Navarro P."/>
            <person name="Collado C."/>
            <person name="Perez-Perez A."/>
            <person name="Ottenwaelder B."/>
            <person name="Duchemin D."/>
            <person name="Cooke R."/>
            <person name="Laudie M."/>
            <person name="Berger-Llauro C."/>
            <person name="Purnelle B."/>
            <person name="Masuy D."/>
            <person name="de Haan M."/>
            <person name="Maarse A.C."/>
            <person name="Alcaraz J.-P."/>
            <person name="Cottet A."/>
            <person name="Casacuberta E."/>
            <person name="Monfort A."/>
            <person name="Argiriou A."/>
            <person name="Flores M."/>
            <person name="Liguori R."/>
            <person name="Vitale D."/>
            <person name="Mannhaupt G."/>
            <person name="Haase D."/>
            <person name="Schoof H."/>
            <person name="Rudd S."/>
            <person name="Zaccaria P."/>
            <person name="Mewes H.-W."/>
            <person name="Mayer K.F.X."/>
            <person name="Kaul S."/>
            <person name="Town C.D."/>
            <person name="Koo H.L."/>
            <person name="Tallon L.J."/>
            <person name="Jenkins J."/>
            <person name="Rooney T."/>
            <person name="Rizzo M."/>
            <person name="Walts A."/>
            <person name="Utterback T."/>
            <person name="Fujii C.Y."/>
            <person name="Shea T.P."/>
            <person name="Creasy T.H."/>
            <person name="Haas B."/>
            <person name="Maiti R."/>
            <person name="Wu D."/>
            <person name="Peterson J."/>
            <person name="Van Aken S."/>
            <person name="Pai G."/>
            <person name="Militscher J."/>
            <person name="Sellers P."/>
            <person name="Gill J.E."/>
            <person name="Feldblyum T.V."/>
            <person name="Preuss D."/>
            <person name="Lin X."/>
            <person name="Nierman W.C."/>
            <person name="Salzberg S.L."/>
            <person name="White O."/>
            <person name="Venter J.C."/>
            <person name="Fraser C.M."/>
            <person name="Kaneko T."/>
            <person name="Nakamura Y."/>
            <person name="Sato S."/>
            <person name="Kato T."/>
            <person name="Asamizu E."/>
            <person name="Sasamoto S."/>
            <person name="Kimura T."/>
            <person name="Idesawa K."/>
            <person name="Kawashima K."/>
            <person name="Kishida Y."/>
            <person name="Kiyokawa C."/>
            <person name="Kohara M."/>
            <person name="Matsumoto M."/>
            <person name="Matsuno A."/>
            <person name="Muraki A."/>
            <person name="Nakayama S."/>
            <person name="Nakazaki N."/>
            <person name="Shinpo S."/>
            <person name="Takeuchi C."/>
            <person name="Wada T."/>
            <person name="Watanabe A."/>
            <person name="Yamada M."/>
            <person name="Yasuda M."/>
            <person name="Tabata S."/>
        </authorList>
    </citation>
    <scope>NUCLEOTIDE SEQUENCE [LARGE SCALE GENOMIC DNA]</scope>
    <source>
        <strain>cv. Columbia</strain>
    </source>
</reference>
<reference key="2">
    <citation type="journal article" date="2017" name="Plant J.">
        <title>Araport11: a complete reannotation of the Arabidopsis thaliana reference genome.</title>
        <authorList>
            <person name="Cheng C.Y."/>
            <person name="Krishnakumar V."/>
            <person name="Chan A.P."/>
            <person name="Thibaud-Nissen F."/>
            <person name="Schobel S."/>
            <person name="Town C.D."/>
        </authorList>
    </citation>
    <scope>GENOME REANNOTATION</scope>
    <source>
        <strain>cv. Columbia</strain>
    </source>
</reference>
<reference key="3">
    <citation type="journal article" date="2011" name="Biosci. Biotechnol. Biochem.">
        <title>Double-knockout of putative endo-beta-N-acetylglucosaminidase (ENGase) genes in Arabidopsis thaliana: loss of ENGase activity induced accumulation of high-mannose type free N-glycans bearing N,N'-acetylchitobiosyl unit.</title>
        <authorList>
            <person name="Kimura Y."/>
            <person name="Takeoka Y."/>
            <person name="Inoue M."/>
            <person name="Maeda M."/>
            <person name="Fujiyama K."/>
        </authorList>
    </citation>
    <scope>FUNCTION</scope>
    <scope>CATALYTIC ACTIVITY</scope>
    <scope>DISRUPTION PHENOTYPE</scope>
</reference>
<reference key="4">
    <citation type="journal article" date="2011" name="Plant Mol. Biol.">
        <title>The two endo-beta-N-acetylglucosaminidase genes from Arabidopsis thaliana encode cytoplasmic enzymes controlling free N-glycan levels.</title>
        <authorList>
            <person name="Fischl R.M."/>
            <person name="Stadlmann J."/>
            <person name="Grass J."/>
            <person name="Altmann F."/>
            <person name="Leonard R."/>
        </authorList>
    </citation>
    <scope>FUNCTION</scope>
    <scope>CATALYTIC ACTIVITY</scope>
    <scope>BIOPHYSICOCHEMICAL PROPERTIES</scope>
    <scope>SUBCELLULAR LOCATION</scope>
    <scope>DISRUPTION PHENOTYPE</scope>
</reference>
<evidence type="ECO:0000269" key="1">
    <source>
    </source>
</evidence>
<evidence type="ECO:0000269" key="2">
    <source>
    </source>
</evidence>
<evidence type="ECO:0000303" key="3">
    <source>
    </source>
</evidence>
<evidence type="ECO:0000305" key="4"/>
<evidence type="ECO:0000312" key="5">
    <source>
        <dbReference type="Araport" id="AT3G11040"/>
    </source>
</evidence>
<evidence type="ECO:0000312" key="6">
    <source>
        <dbReference type="EMBL" id="AAF01517.1"/>
    </source>
</evidence>
<gene>
    <name evidence="4" type="primary">ENGASE2</name>
    <name evidence="3" type="synonym">ENGASE85B</name>
    <name evidence="5" type="ordered locus">At3g11040</name>
    <name evidence="6" type="ORF">F9F8.14</name>
</gene>
<protein>
    <recommendedName>
        <fullName evidence="4">Cytosolic endo-beta-N-acetylglucosaminidase 2</fullName>
        <shortName evidence="4">ENGase 2</shortName>
        <ecNumber evidence="1 2">3.2.1.96</ecNumber>
    </recommendedName>
    <alternativeName>
        <fullName evidence="3">Endo-beta-N-acetyglucosaminidase 85B</fullName>
        <shortName evidence="3">AtENGase85B</shortName>
    </alternativeName>
</protein>
<organism>
    <name type="scientific">Arabidopsis thaliana</name>
    <name type="common">Mouse-ear cress</name>
    <dbReference type="NCBI Taxonomy" id="3702"/>
    <lineage>
        <taxon>Eukaryota</taxon>
        <taxon>Viridiplantae</taxon>
        <taxon>Streptophyta</taxon>
        <taxon>Embryophyta</taxon>
        <taxon>Tracheophyta</taxon>
        <taxon>Spermatophyta</taxon>
        <taxon>Magnoliopsida</taxon>
        <taxon>eudicotyledons</taxon>
        <taxon>Gunneridae</taxon>
        <taxon>Pentapetalae</taxon>
        <taxon>rosids</taxon>
        <taxon>malvids</taxon>
        <taxon>Brassicales</taxon>
        <taxon>Brassicaceae</taxon>
        <taxon>Camelineae</taxon>
        <taxon>Arabidopsis</taxon>
    </lineage>
</organism>